<feature type="signal peptide" evidence="2">
    <location>
        <begin position="1"/>
        <end position="25"/>
    </location>
</feature>
<feature type="chain" id="PRO_0000372775" description="Defense protein 4">
    <location>
        <begin position="26"/>
        <end position="65"/>
    </location>
</feature>
<organism>
    <name type="scientific">Lonomia obliqua</name>
    <name type="common">Moth</name>
    <dbReference type="NCBI Taxonomy" id="304329"/>
    <lineage>
        <taxon>Eukaryota</taxon>
        <taxon>Metazoa</taxon>
        <taxon>Ecdysozoa</taxon>
        <taxon>Arthropoda</taxon>
        <taxon>Hexapoda</taxon>
        <taxon>Insecta</taxon>
        <taxon>Pterygota</taxon>
        <taxon>Neoptera</taxon>
        <taxon>Endopterygota</taxon>
        <taxon>Lepidoptera</taxon>
        <taxon>Glossata</taxon>
        <taxon>Ditrysia</taxon>
        <taxon>Bombycoidea</taxon>
        <taxon>Saturniidae</taxon>
        <taxon>Hemileucinae</taxon>
        <taxon>Lonomia</taxon>
    </lineage>
</organism>
<accession>Q5MGD8</accession>
<evidence type="ECO:0000250" key="1"/>
<evidence type="ECO:0000255" key="2"/>
<evidence type="ECO:0000305" key="3"/>
<protein>
    <recommendedName>
        <fullName>Defense protein 4</fullName>
        <shortName>DFP-4</shortName>
    </recommendedName>
</protein>
<dbReference type="EMBL" id="AY829848">
    <property type="protein sequence ID" value="AAV91462.1"/>
    <property type="molecule type" value="mRNA"/>
</dbReference>
<dbReference type="SMR" id="Q5MGD8"/>
<dbReference type="GO" id="GO:0005576">
    <property type="term" value="C:extracellular region"/>
    <property type="evidence" value="ECO:0007669"/>
    <property type="project" value="UniProtKB-SubCell"/>
</dbReference>
<dbReference type="GO" id="GO:0019731">
    <property type="term" value="P:antibacterial humoral response"/>
    <property type="evidence" value="ECO:0007669"/>
    <property type="project" value="InterPro"/>
</dbReference>
<dbReference type="GO" id="GO:0050830">
    <property type="term" value="P:defense response to Gram-positive bacterium"/>
    <property type="evidence" value="ECO:0007669"/>
    <property type="project" value="UniProtKB-ARBA"/>
</dbReference>
<dbReference type="GO" id="GO:0045087">
    <property type="term" value="P:innate immune response"/>
    <property type="evidence" value="ECO:0007669"/>
    <property type="project" value="UniProtKB-KW"/>
</dbReference>
<dbReference type="InterPro" id="IPR000875">
    <property type="entry name" value="Cecropin"/>
</dbReference>
<dbReference type="Pfam" id="PF00272">
    <property type="entry name" value="Cecropin"/>
    <property type="match status" value="1"/>
</dbReference>
<sequence>MYGMSVRILMMSSLSACMLVSTVTAWDFLKELEGVGQRVRDSIISAGPAIDVLKKSQGPRRWSRP</sequence>
<name>DFP4_LONON</name>
<proteinExistence type="inferred from homology"/>
<comment type="function">
    <text evidence="1">Cecropins have lytic and antibacterial activity against several Gram-positive and Gram-negative bacteria.</text>
</comment>
<comment type="subcellular location">
    <subcellularLocation>
        <location evidence="1">Secreted</location>
    </subcellularLocation>
</comment>
<comment type="similarity">
    <text evidence="3">Belongs to the cecropin family.</text>
</comment>
<keyword id="KW-0027">Amidation</keyword>
<keyword id="KW-0044">Antibiotic</keyword>
<keyword id="KW-0929">Antimicrobial</keyword>
<keyword id="KW-0391">Immunity</keyword>
<keyword id="KW-0399">Innate immunity</keyword>
<keyword id="KW-0964">Secreted</keyword>
<keyword id="KW-0732">Signal</keyword>
<reference key="1">
    <citation type="journal article" date="2005" name="Gene">
        <title>A catalog for the transcripts from the venomous structures of the caterpillar Lonomia obliqua: identification of the proteins potentially involved in the coagulation disorder and hemorrhagic syndrome.</title>
        <authorList>
            <person name="Veiga A.B.G."/>
            <person name="Ribeiro J.M.C."/>
            <person name="Guimaraes J.A."/>
            <person name="Francischetti I.M.B."/>
        </authorList>
    </citation>
    <scope>NUCLEOTIDE SEQUENCE [LARGE SCALE MRNA]</scope>
    <source>
        <tissue>Spicule</tissue>
    </source>
</reference>